<accession>Q9RXP1</accession>
<evidence type="ECO:0000256" key="1">
    <source>
        <dbReference type="SAM" id="MobiDB-lite"/>
    </source>
</evidence>
<evidence type="ECO:0000305" key="2"/>
<organism>
    <name type="scientific">Deinococcus radiodurans (strain ATCC 13939 / DSM 20539 / JCM 16871 / CCUG 27074 / LMG 4051 / NBRC 15346 / NCIMB 9279 / VKM B-1422 / R1)</name>
    <dbReference type="NCBI Taxonomy" id="243230"/>
    <lineage>
        <taxon>Bacteria</taxon>
        <taxon>Thermotogati</taxon>
        <taxon>Deinococcota</taxon>
        <taxon>Deinococci</taxon>
        <taxon>Deinococcales</taxon>
        <taxon>Deinococcaceae</taxon>
        <taxon>Deinococcus</taxon>
    </lineage>
</organism>
<dbReference type="EMBL" id="AE000513">
    <property type="protein sequence ID" value="AAF09854.1"/>
    <property type="status" value="ALT_INIT"/>
    <property type="molecule type" value="Genomic_DNA"/>
</dbReference>
<dbReference type="PIR" id="F75540">
    <property type="entry name" value="F75540"/>
</dbReference>
<dbReference type="RefSeq" id="NP_293992.1">
    <property type="nucleotide sequence ID" value="NC_001263.1"/>
</dbReference>
<dbReference type="RefSeq" id="WP_010886914.1">
    <property type="nucleotide sequence ID" value="NZ_CP150840.1"/>
</dbReference>
<dbReference type="STRING" id="243230.DR_0269"/>
<dbReference type="PaxDb" id="243230-DR_0269"/>
<dbReference type="EnsemblBacteria" id="AAF09854">
    <property type="protein sequence ID" value="AAF09854"/>
    <property type="gene ID" value="DR_0269"/>
</dbReference>
<dbReference type="KEGG" id="dra:DR_0269"/>
<dbReference type="PATRIC" id="fig|243230.17.peg.434"/>
<dbReference type="eggNOG" id="COG0513">
    <property type="taxonomic scope" value="Bacteria"/>
</dbReference>
<dbReference type="HOGENOM" id="CLU_962152_0_0_0"/>
<dbReference type="InParanoid" id="Q9RXP1"/>
<dbReference type="OrthoDB" id="73986at2"/>
<dbReference type="Proteomes" id="UP000002524">
    <property type="component" value="Chromosome 1"/>
</dbReference>
<name>Y269_DEIRA</name>
<keyword id="KW-0903">Direct protein sequencing</keyword>
<keyword id="KW-1185">Reference proteome</keyword>
<comment type="sequence caution" evidence="2">
    <conflict type="erroneous initiation">
        <sequence resource="EMBL-CDS" id="AAF09854"/>
    </conflict>
</comment>
<reference key="1">
    <citation type="journal article" date="1999" name="Science">
        <title>Genome sequence of the radioresistant bacterium Deinococcus radiodurans R1.</title>
        <authorList>
            <person name="White O."/>
            <person name="Eisen J.A."/>
            <person name="Heidelberg J.F."/>
            <person name="Hickey E.K."/>
            <person name="Peterson J.D."/>
            <person name="Dodson R.J."/>
            <person name="Haft D.H."/>
            <person name="Gwinn M.L."/>
            <person name="Nelson W.C."/>
            <person name="Richardson D.L."/>
            <person name="Moffat K.S."/>
            <person name="Qin H."/>
            <person name="Jiang L."/>
            <person name="Pamphile W."/>
            <person name="Crosby M."/>
            <person name="Shen M."/>
            <person name="Vamathevan J.J."/>
            <person name="Lam P."/>
            <person name="McDonald L.A."/>
            <person name="Utterback T.R."/>
            <person name="Zalewski C."/>
            <person name="Makarova K.S."/>
            <person name="Aravind L."/>
            <person name="Daly M.J."/>
            <person name="Minton K.W."/>
            <person name="Fleischmann R.D."/>
            <person name="Ketchum K.A."/>
            <person name="Nelson K.E."/>
            <person name="Salzberg S.L."/>
            <person name="Smith H.O."/>
            <person name="Venter J.C."/>
            <person name="Fraser C.M."/>
        </authorList>
    </citation>
    <scope>NUCLEOTIDE SEQUENCE [LARGE SCALE GENOMIC DNA]</scope>
    <source>
        <strain>ATCC 13939 / DSM 20539 / JCM 16871 / CCUG 27074 / LMG 4051 / NBRC 15346 / NCIMB 9279 / VKM B-1422 / R1</strain>
    </source>
</reference>
<reference key="2">
    <citation type="journal article" date="2004" name="Biochem. Biophys. Res. Commun.">
        <title>Protein recycling is a major component of post-irradiation recovery in Deinococcus radiodurans strain R1.</title>
        <authorList>
            <person name="Joshi B.S."/>
            <person name="Schmid R."/>
            <person name="Altendorf K."/>
            <person name="Apte S.K."/>
        </authorList>
    </citation>
    <scope>PROTEIN SEQUENCE OF 1-19</scope>
    <source>
        <strain>ATCC 13939 / DSM 20539 / JCM 16871 / CCUG 27074 / LMG 4051 / NBRC 15346 / NCIMB 9279 / VKM B-1422 / R1</strain>
    </source>
</reference>
<feature type="chain" id="PRO_0000221641" description="Uncharacterized protein DR_0269">
    <location>
        <begin position="1"/>
        <end position="322"/>
    </location>
</feature>
<feature type="region of interest" description="Disordered" evidence="1">
    <location>
        <begin position="1"/>
        <end position="94"/>
    </location>
</feature>
<feature type="region of interest" description="Disordered" evidence="1">
    <location>
        <begin position="125"/>
        <end position="322"/>
    </location>
</feature>
<feature type="compositionally biased region" description="Polar residues" evidence="1">
    <location>
        <begin position="1"/>
        <end position="13"/>
    </location>
</feature>
<feature type="compositionally biased region" description="Low complexity" evidence="1">
    <location>
        <begin position="14"/>
        <end position="31"/>
    </location>
</feature>
<feature type="compositionally biased region" description="Polar residues" evidence="1">
    <location>
        <begin position="32"/>
        <end position="50"/>
    </location>
</feature>
<feature type="compositionally biased region" description="Acidic residues" evidence="1">
    <location>
        <begin position="64"/>
        <end position="75"/>
    </location>
</feature>
<feature type="compositionally biased region" description="Basic and acidic residues" evidence="1">
    <location>
        <begin position="141"/>
        <end position="227"/>
    </location>
</feature>
<feature type="compositionally biased region" description="Basic and acidic residues" evidence="1">
    <location>
        <begin position="235"/>
        <end position="269"/>
    </location>
</feature>
<feature type="compositionally biased region" description="Basic and acidic residues" evidence="1">
    <location>
        <begin position="277"/>
        <end position="295"/>
    </location>
</feature>
<feature type="compositionally biased region" description="Basic and acidic residues" evidence="1">
    <location>
        <begin position="308"/>
        <end position="322"/>
    </location>
</feature>
<sequence>MTNADEQNMGQQEGTDTATTAQDTNTQTVGTQSENTQNTQQASDAQTEQTPAELRDVLPQLTGEVDEDDVLDAQEEQAAGQSARKVDEDGEEYEEEFIDADDLMGLLGEMKEMLEAQSKEIRGLRREMRELRESQGGGFRGGDRGGDRGGFRPREDRGGFGGDRDRGGFRPREDRGERSFGGDRGGDRGGFRPREDRGGFGGDRDRGGFRPREDRGERSFGGDRGGDRGGQGGFRPREDRGGFGDRDRGGFRPREDRGERNFGGDRGGDRGGQGGFRPREDRNFGDREFRPRTDDAQGNQEGGFRPRARADRGWANRRTDEE</sequence>
<proteinExistence type="evidence at protein level"/>
<protein>
    <recommendedName>
        <fullName>Uncharacterized protein DR_0269</fullName>
    </recommendedName>
</protein>
<gene>
    <name type="ordered locus">DR_0269</name>
</gene>